<name>NIKR_ECOSE</name>
<proteinExistence type="inferred from homology"/>
<feature type="chain" id="PRO_1000125822" description="Nickel-responsive regulator">
    <location>
        <begin position="1"/>
        <end position="133"/>
    </location>
</feature>
<feature type="binding site" evidence="1">
    <location>
        <position position="76"/>
    </location>
    <ligand>
        <name>Ni(2+)</name>
        <dbReference type="ChEBI" id="CHEBI:49786"/>
    </ligand>
</feature>
<feature type="binding site" evidence="1">
    <location>
        <position position="87"/>
    </location>
    <ligand>
        <name>Ni(2+)</name>
        <dbReference type="ChEBI" id="CHEBI:49786"/>
    </ligand>
</feature>
<feature type="binding site" evidence="1">
    <location>
        <position position="89"/>
    </location>
    <ligand>
        <name>Ni(2+)</name>
        <dbReference type="ChEBI" id="CHEBI:49786"/>
    </ligand>
</feature>
<feature type="binding site" evidence="1">
    <location>
        <position position="95"/>
    </location>
    <ligand>
        <name>Ni(2+)</name>
        <dbReference type="ChEBI" id="CHEBI:49786"/>
    </ligand>
</feature>
<comment type="function">
    <text evidence="1">Transcriptional repressor of the nikABCDE operon. Is active in the presence of excessive concentrations of intracellular nickel.</text>
</comment>
<comment type="cofactor">
    <cofactor evidence="1">
        <name>Ni(2+)</name>
        <dbReference type="ChEBI" id="CHEBI:49786"/>
    </cofactor>
    <text evidence="1">Binds 1 nickel ion per subunit.</text>
</comment>
<comment type="subunit">
    <text evidence="1">Homotetramer.</text>
</comment>
<comment type="similarity">
    <text evidence="1">Belongs to the transcriptional regulatory CopG/NikR family.</text>
</comment>
<accession>B6I346</accession>
<organism>
    <name type="scientific">Escherichia coli (strain SE11)</name>
    <dbReference type="NCBI Taxonomy" id="409438"/>
    <lineage>
        <taxon>Bacteria</taxon>
        <taxon>Pseudomonadati</taxon>
        <taxon>Pseudomonadota</taxon>
        <taxon>Gammaproteobacteria</taxon>
        <taxon>Enterobacterales</taxon>
        <taxon>Enterobacteriaceae</taxon>
        <taxon>Escherichia</taxon>
    </lineage>
</organism>
<sequence>MQRVTITLDDDLLETLDSLSQRRGYNNRSEAIRDILRSALAQEATQQHGTQGFAVLSYVYEHEKRDLASRIVSTQHHHHELSVATLHVHINHDDCLEIAVLKGDMGDVQHFADDVIAQRGVRHGHLQCLPKED</sequence>
<dbReference type="EMBL" id="AP009240">
    <property type="protein sequence ID" value="BAG79273.1"/>
    <property type="molecule type" value="Genomic_DNA"/>
</dbReference>
<dbReference type="RefSeq" id="WP_001190064.1">
    <property type="nucleotide sequence ID" value="NC_011415.1"/>
</dbReference>
<dbReference type="SMR" id="B6I346"/>
<dbReference type="KEGG" id="ecy:ECSE_3749"/>
<dbReference type="HOGENOM" id="CLU_113319_1_4_6"/>
<dbReference type="Proteomes" id="UP000008199">
    <property type="component" value="Chromosome"/>
</dbReference>
<dbReference type="GO" id="GO:0003700">
    <property type="term" value="F:DNA-binding transcription factor activity"/>
    <property type="evidence" value="ECO:0007669"/>
    <property type="project" value="UniProtKB-UniRule"/>
</dbReference>
<dbReference type="GO" id="GO:0016151">
    <property type="term" value="F:nickel cation binding"/>
    <property type="evidence" value="ECO:0007669"/>
    <property type="project" value="UniProtKB-UniRule"/>
</dbReference>
<dbReference type="GO" id="GO:0043565">
    <property type="term" value="F:sequence-specific DNA binding"/>
    <property type="evidence" value="ECO:0007669"/>
    <property type="project" value="UniProtKB-ARBA"/>
</dbReference>
<dbReference type="GO" id="GO:0010045">
    <property type="term" value="P:response to nickel cation"/>
    <property type="evidence" value="ECO:0007669"/>
    <property type="project" value="InterPro"/>
</dbReference>
<dbReference type="CDD" id="cd22231">
    <property type="entry name" value="RHH_NikR_HicB-like"/>
    <property type="match status" value="1"/>
</dbReference>
<dbReference type="FunFam" id="1.10.1220.10:FF:000001">
    <property type="entry name" value="Nickel-responsive regulator"/>
    <property type="match status" value="1"/>
</dbReference>
<dbReference type="FunFam" id="3.30.70.1150:FF:000002">
    <property type="entry name" value="Nickel-responsive regulator"/>
    <property type="match status" value="1"/>
</dbReference>
<dbReference type="Gene3D" id="3.30.70.1150">
    <property type="entry name" value="ACT-like. Chain A, domain 2"/>
    <property type="match status" value="1"/>
</dbReference>
<dbReference type="Gene3D" id="1.10.1220.10">
    <property type="entry name" value="Met repressor-like"/>
    <property type="match status" value="1"/>
</dbReference>
<dbReference type="HAMAP" id="MF_00476">
    <property type="entry name" value="NikR"/>
    <property type="match status" value="1"/>
</dbReference>
<dbReference type="InterPro" id="IPR027271">
    <property type="entry name" value="Acetolactate_synth/TF_NikR_C"/>
</dbReference>
<dbReference type="InterPro" id="IPR045865">
    <property type="entry name" value="ACT-like_dom_sf"/>
</dbReference>
<dbReference type="InterPro" id="IPR013321">
    <property type="entry name" value="Arc_rbn_hlx_hlx"/>
</dbReference>
<dbReference type="InterPro" id="IPR002145">
    <property type="entry name" value="CopG"/>
</dbReference>
<dbReference type="InterPro" id="IPR050192">
    <property type="entry name" value="CopG/NikR_regulator"/>
</dbReference>
<dbReference type="InterPro" id="IPR022988">
    <property type="entry name" value="Ni_resp_reg_NikR"/>
</dbReference>
<dbReference type="InterPro" id="IPR014160">
    <property type="entry name" value="Nickel_NikR_proteobac"/>
</dbReference>
<dbReference type="InterPro" id="IPR010985">
    <property type="entry name" value="Ribbon_hlx_hlx"/>
</dbReference>
<dbReference type="InterPro" id="IPR014864">
    <property type="entry name" value="TF_NikR_Ni-bd_C"/>
</dbReference>
<dbReference type="NCBIfam" id="TIGR02793">
    <property type="entry name" value="nikR"/>
    <property type="match status" value="1"/>
</dbReference>
<dbReference type="NCBIfam" id="NF002815">
    <property type="entry name" value="PRK02967.1"/>
    <property type="match status" value="1"/>
</dbReference>
<dbReference type="NCBIfam" id="NF003381">
    <property type="entry name" value="PRK04460.1"/>
    <property type="match status" value="1"/>
</dbReference>
<dbReference type="PANTHER" id="PTHR34719">
    <property type="entry name" value="NICKEL-RESPONSIVE REGULATOR"/>
    <property type="match status" value="1"/>
</dbReference>
<dbReference type="PANTHER" id="PTHR34719:SF2">
    <property type="entry name" value="NICKEL-RESPONSIVE REGULATOR"/>
    <property type="match status" value="1"/>
</dbReference>
<dbReference type="Pfam" id="PF08753">
    <property type="entry name" value="NikR_C"/>
    <property type="match status" value="1"/>
</dbReference>
<dbReference type="Pfam" id="PF01402">
    <property type="entry name" value="RHH_1"/>
    <property type="match status" value="1"/>
</dbReference>
<dbReference type="SUPFAM" id="SSF55021">
    <property type="entry name" value="ACT-like"/>
    <property type="match status" value="1"/>
</dbReference>
<dbReference type="SUPFAM" id="SSF47598">
    <property type="entry name" value="Ribbon-helix-helix"/>
    <property type="match status" value="1"/>
</dbReference>
<reference key="1">
    <citation type="journal article" date="2008" name="DNA Res.">
        <title>Complete genome sequence and comparative analysis of the wild-type commensal Escherichia coli strain SE11 isolated from a healthy adult.</title>
        <authorList>
            <person name="Oshima K."/>
            <person name="Toh H."/>
            <person name="Ogura Y."/>
            <person name="Sasamoto H."/>
            <person name="Morita H."/>
            <person name="Park S.-H."/>
            <person name="Ooka T."/>
            <person name="Iyoda S."/>
            <person name="Taylor T.D."/>
            <person name="Hayashi T."/>
            <person name="Itoh K."/>
            <person name="Hattori M."/>
        </authorList>
    </citation>
    <scope>NUCLEOTIDE SEQUENCE [LARGE SCALE GENOMIC DNA]</scope>
    <source>
        <strain>SE11</strain>
    </source>
</reference>
<protein>
    <recommendedName>
        <fullName evidence="1">Nickel-responsive regulator</fullName>
    </recommendedName>
</protein>
<gene>
    <name evidence="1" type="primary">nikR</name>
    <name type="ordered locus">ECSE_3749</name>
</gene>
<evidence type="ECO:0000255" key="1">
    <source>
        <dbReference type="HAMAP-Rule" id="MF_00476"/>
    </source>
</evidence>
<keyword id="KW-0238">DNA-binding</keyword>
<keyword id="KW-0479">Metal-binding</keyword>
<keyword id="KW-0533">Nickel</keyword>
<keyword id="KW-0678">Repressor</keyword>
<keyword id="KW-0804">Transcription</keyword>
<keyword id="KW-0805">Transcription regulation</keyword>